<accession>A9A837</accession>
<protein>
    <recommendedName>
        <fullName evidence="1">Large ribosomal subunit protein uL1</fullName>
    </recommendedName>
    <alternativeName>
        <fullName evidence="2">50S ribosomal protein L1</fullName>
    </alternativeName>
</protein>
<gene>
    <name evidence="1" type="primary">rpl1</name>
    <name type="ordered locus">MmarC6_0693</name>
</gene>
<dbReference type="EMBL" id="CP000867">
    <property type="protein sequence ID" value="ABX01510.1"/>
    <property type="molecule type" value="Genomic_DNA"/>
</dbReference>
<dbReference type="SMR" id="A9A837"/>
<dbReference type="STRING" id="444158.MmarC6_0693"/>
<dbReference type="KEGG" id="mmx:MmarC6_0693"/>
<dbReference type="eggNOG" id="arCOG04289">
    <property type="taxonomic scope" value="Archaea"/>
</dbReference>
<dbReference type="HOGENOM" id="CLU_062853_4_0_2"/>
<dbReference type="OrthoDB" id="10382at2157"/>
<dbReference type="PhylomeDB" id="A9A837"/>
<dbReference type="GO" id="GO:0015934">
    <property type="term" value="C:large ribosomal subunit"/>
    <property type="evidence" value="ECO:0007669"/>
    <property type="project" value="InterPro"/>
</dbReference>
<dbReference type="GO" id="GO:0019843">
    <property type="term" value="F:rRNA binding"/>
    <property type="evidence" value="ECO:0007669"/>
    <property type="project" value="UniProtKB-UniRule"/>
</dbReference>
<dbReference type="GO" id="GO:0003735">
    <property type="term" value="F:structural constituent of ribosome"/>
    <property type="evidence" value="ECO:0007669"/>
    <property type="project" value="InterPro"/>
</dbReference>
<dbReference type="GO" id="GO:0000049">
    <property type="term" value="F:tRNA binding"/>
    <property type="evidence" value="ECO:0007669"/>
    <property type="project" value="UniProtKB-KW"/>
</dbReference>
<dbReference type="GO" id="GO:0006417">
    <property type="term" value="P:regulation of translation"/>
    <property type="evidence" value="ECO:0007669"/>
    <property type="project" value="UniProtKB-KW"/>
</dbReference>
<dbReference type="GO" id="GO:0006412">
    <property type="term" value="P:translation"/>
    <property type="evidence" value="ECO:0007669"/>
    <property type="project" value="UniProtKB-UniRule"/>
</dbReference>
<dbReference type="CDD" id="cd00403">
    <property type="entry name" value="Ribosomal_L1"/>
    <property type="match status" value="1"/>
</dbReference>
<dbReference type="FunFam" id="3.40.50.790:FF:000005">
    <property type="entry name" value="50S ribosomal protein L1"/>
    <property type="match status" value="1"/>
</dbReference>
<dbReference type="Gene3D" id="3.30.190.20">
    <property type="match status" value="1"/>
</dbReference>
<dbReference type="Gene3D" id="3.40.50.790">
    <property type="match status" value="1"/>
</dbReference>
<dbReference type="HAMAP" id="MF_01318_A">
    <property type="entry name" value="Ribosomal_uL1_A"/>
    <property type="match status" value="1"/>
</dbReference>
<dbReference type="InterPro" id="IPR002143">
    <property type="entry name" value="Ribosomal_uL1"/>
</dbReference>
<dbReference type="InterPro" id="IPR023674">
    <property type="entry name" value="Ribosomal_uL1-like"/>
</dbReference>
<dbReference type="InterPro" id="IPR028364">
    <property type="entry name" value="Ribosomal_uL1/biogenesis"/>
</dbReference>
<dbReference type="InterPro" id="IPR016095">
    <property type="entry name" value="Ribosomal_uL1_3-a/b-sand"/>
</dbReference>
<dbReference type="InterPro" id="IPR023669">
    <property type="entry name" value="Ribosomal_uL1_arc"/>
</dbReference>
<dbReference type="InterPro" id="IPR023673">
    <property type="entry name" value="Ribosomal_uL1_CS"/>
</dbReference>
<dbReference type="NCBIfam" id="NF003244">
    <property type="entry name" value="PRK04203.1"/>
    <property type="match status" value="1"/>
</dbReference>
<dbReference type="PANTHER" id="PTHR36427">
    <property type="entry name" value="54S RIBOSOMAL PROTEIN L1, MITOCHONDRIAL"/>
    <property type="match status" value="1"/>
</dbReference>
<dbReference type="PANTHER" id="PTHR36427:SF3">
    <property type="entry name" value="LARGE RIBOSOMAL SUBUNIT PROTEIN UL1M"/>
    <property type="match status" value="1"/>
</dbReference>
<dbReference type="Pfam" id="PF00687">
    <property type="entry name" value="Ribosomal_L1"/>
    <property type="match status" value="1"/>
</dbReference>
<dbReference type="PIRSF" id="PIRSF002155">
    <property type="entry name" value="Ribosomal_L1"/>
    <property type="match status" value="1"/>
</dbReference>
<dbReference type="SUPFAM" id="SSF56808">
    <property type="entry name" value="Ribosomal protein L1"/>
    <property type="match status" value="1"/>
</dbReference>
<dbReference type="PROSITE" id="PS01199">
    <property type="entry name" value="RIBOSOMAL_L1"/>
    <property type="match status" value="1"/>
</dbReference>
<comment type="function">
    <text evidence="1">Binds directly to 23S rRNA. Probably involved in E site tRNA release.</text>
</comment>
<comment type="function">
    <text evidence="1">Protein L1 is also a translational repressor protein, it controls the translation of its operon by binding to its mRNA.</text>
</comment>
<comment type="subunit">
    <text evidence="1">Part of the 50S ribosomal subunit.</text>
</comment>
<comment type="similarity">
    <text evidence="1">Belongs to the universal ribosomal protein uL1 family.</text>
</comment>
<organism>
    <name type="scientific">Methanococcus maripaludis (strain C6 / ATCC BAA-1332)</name>
    <dbReference type="NCBI Taxonomy" id="444158"/>
    <lineage>
        <taxon>Archaea</taxon>
        <taxon>Methanobacteriati</taxon>
        <taxon>Methanobacteriota</taxon>
        <taxon>Methanomada group</taxon>
        <taxon>Methanococci</taxon>
        <taxon>Methanococcales</taxon>
        <taxon>Methanococcaceae</taxon>
        <taxon>Methanococcus</taxon>
    </lineage>
</organism>
<evidence type="ECO:0000255" key="1">
    <source>
        <dbReference type="HAMAP-Rule" id="MF_01318"/>
    </source>
</evidence>
<evidence type="ECO:0000305" key="2"/>
<name>RL1_METM6</name>
<feature type="chain" id="PRO_1000141427" description="Large ribosomal subunit protein uL1">
    <location>
        <begin position="1"/>
        <end position="213"/>
    </location>
</feature>
<proteinExistence type="inferred from homology"/>
<sequence length="213" mass="23170">MDSDKILNAVKEARTLAKPRNFTQSVDLIVNLKELDLTRPENRLKEQIVLPSGRGKDVAIAVIAKGDLAAQAEDMGLTVIRQEELEELGKNKKTAKKIANAHGFFIAQADMMPLVGKSLGPVLGPRGKMPQPVPANANLAPLVARFQKTVAINTRDKSLFQVYIGHESMSDEELAANAEAILNVVSKKYEKGLYHVKSAFTKLTMGAAAPIEK</sequence>
<keyword id="KW-0678">Repressor</keyword>
<keyword id="KW-0687">Ribonucleoprotein</keyword>
<keyword id="KW-0689">Ribosomal protein</keyword>
<keyword id="KW-0694">RNA-binding</keyword>
<keyword id="KW-0699">rRNA-binding</keyword>
<keyword id="KW-0810">Translation regulation</keyword>
<keyword id="KW-0820">tRNA-binding</keyword>
<reference key="1">
    <citation type="submission" date="2007-10" db="EMBL/GenBank/DDBJ databases">
        <title>Complete sequence of Methanococcus maripaludis C6.</title>
        <authorList>
            <consortium name="US DOE Joint Genome Institute"/>
            <person name="Copeland A."/>
            <person name="Lucas S."/>
            <person name="Lapidus A."/>
            <person name="Barry K."/>
            <person name="Glavina del Rio T."/>
            <person name="Dalin E."/>
            <person name="Tice H."/>
            <person name="Pitluck S."/>
            <person name="Clum A."/>
            <person name="Schmutz J."/>
            <person name="Larimer F."/>
            <person name="Land M."/>
            <person name="Hauser L."/>
            <person name="Kyrpides N."/>
            <person name="Mikhailova N."/>
            <person name="Sieprawska-Lupa M."/>
            <person name="Whitman W.B."/>
            <person name="Richardson P."/>
        </authorList>
    </citation>
    <scope>NUCLEOTIDE SEQUENCE [LARGE SCALE GENOMIC DNA]</scope>
    <source>
        <strain>C6 / ATCC BAA-1332</strain>
    </source>
</reference>